<name>BRK1_MAIZE</name>
<organism>
    <name type="scientific">Zea mays</name>
    <name type="common">Maize</name>
    <dbReference type="NCBI Taxonomy" id="4577"/>
    <lineage>
        <taxon>Eukaryota</taxon>
        <taxon>Viridiplantae</taxon>
        <taxon>Streptophyta</taxon>
        <taxon>Embryophyta</taxon>
        <taxon>Tracheophyta</taxon>
        <taxon>Spermatophyta</taxon>
        <taxon>Magnoliopsida</taxon>
        <taxon>Liliopsida</taxon>
        <taxon>Poales</taxon>
        <taxon>Poaceae</taxon>
        <taxon>PACMAD clade</taxon>
        <taxon>Panicoideae</taxon>
        <taxon>Andropogonodae</taxon>
        <taxon>Andropogoneae</taxon>
        <taxon>Tripsacinae</taxon>
        <taxon>Zea</taxon>
    </lineage>
</organism>
<evidence type="ECO:0000250" key="1"/>
<evidence type="ECO:0000255" key="2"/>
<evidence type="ECO:0000269" key="3">
    <source>
    </source>
</evidence>
<evidence type="ECO:0000305" key="4"/>
<dbReference type="EMBL" id="AY093614">
    <property type="protein sequence ID" value="AAM18794.1"/>
    <property type="molecule type" value="mRNA"/>
</dbReference>
<dbReference type="RefSeq" id="NP_001105190.1">
    <property type="nucleotide sequence ID" value="NM_001111720.2"/>
</dbReference>
<dbReference type="SMR" id="Q8RW98"/>
<dbReference type="FunCoup" id="Q8RW98">
    <property type="interactions" value="2396"/>
</dbReference>
<dbReference type="STRING" id="4577.Q8RW98"/>
<dbReference type="PaxDb" id="4577-GRMZM5G842058_P01"/>
<dbReference type="EnsemblPlants" id="Zm00001eb259430_T001">
    <property type="protein sequence ID" value="Zm00001eb259430_P001"/>
    <property type="gene ID" value="Zm00001eb259430"/>
</dbReference>
<dbReference type="GeneID" id="542086"/>
<dbReference type="Gramene" id="Zm00001eb259430_T001">
    <property type="protein sequence ID" value="Zm00001eb259430_P001"/>
    <property type="gene ID" value="Zm00001eb259430"/>
</dbReference>
<dbReference type="KEGG" id="zma:542086"/>
<dbReference type="MaizeGDB" id="854976"/>
<dbReference type="eggNOG" id="ENOG502S3PY">
    <property type="taxonomic scope" value="Eukaryota"/>
</dbReference>
<dbReference type="HOGENOM" id="CLU_175202_0_0_1"/>
<dbReference type="InParanoid" id="Q8RW98"/>
<dbReference type="OrthoDB" id="1883432at2759"/>
<dbReference type="Proteomes" id="UP000007305">
    <property type="component" value="Chromosome 5"/>
</dbReference>
<dbReference type="ExpressionAtlas" id="Q8RW98">
    <property type="expression patterns" value="baseline and differential"/>
</dbReference>
<dbReference type="GO" id="GO:0005856">
    <property type="term" value="C:cytoskeleton"/>
    <property type="evidence" value="ECO:0007669"/>
    <property type="project" value="UniProtKB-SubCell"/>
</dbReference>
<dbReference type="GO" id="GO:0005886">
    <property type="term" value="C:plasma membrane"/>
    <property type="evidence" value="ECO:0007669"/>
    <property type="project" value="EnsemblPlants"/>
</dbReference>
<dbReference type="GO" id="GO:0031209">
    <property type="term" value="C:SCAR complex"/>
    <property type="evidence" value="ECO:0000318"/>
    <property type="project" value="GO_Central"/>
</dbReference>
<dbReference type="GO" id="GO:0042802">
    <property type="term" value="F:identical protein binding"/>
    <property type="evidence" value="ECO:0000314"/>
    <property type="project" value="UniProtKB"/>
</dbReference>
<dbReference type="GO" id="GO:0044877">
    <property type="term" value="F:protein-containing complex binding"/>
    <property type="evidence" value="ECO:0007669"/>
    <property type="project" value="InterPro"/>
</dbReference>
<dbReference type="GO" id="GO:0007015">
    <property type="term" value="P:actin filament organization"/>
    <property type="evidence" value="ECO:0007669"/>
    <property type="project" value="InterPro"/>
</dbReference>
<dbReference type="GO" id="GO:0048870">
    <property type="term" value="P:cell motility"/>
    <property type="evidence" value="ECO:0000318"/>
    <property type="project" value="GO_Central"/>
</dbReference>
<dbReference type="GO" id="GO:0008064">
    <property type="term" value="P:regulation of actin polymerization or depolymerization"/>
    <property type="evidence" value="ECO:0000318"/>
    <property type="project" value="GO_Central"/>
</dbReference>
<dbReference type="GO" id="GO:0010090">
    <property type="term" value="P:trichome morphogenesis"/>
    <property type="evidence" value="ECO:0007669"/>
    <property type="project" value="EnsemblPlants"/>
</dbReference>
<dbReference type="FunFam" id="1.20.5.110:FF:000042">
    <property type="entry name" value="protein BRICK 1"/>
    <property type="match status" value="1"/>
</dbReference>
<dbReference type="Gene3D" id="1.20.5.110">
    <property type="match status" value="1"/>
</dbReference>
<dbReference type="InterPro" id="IPR033378">
    <property type="entry name" value="BRICK1"/>
</dbReference>
<dbReference type="PANTHER" id="PTHR33668">
    <property type="entry name" value="PROTEIN BRICK1"/>
    <property type="match status" value="1"/>
</dbReference>
<dbReference type="PANTHER" id="PTHR33668:SF1">
    <property type="entry name" value="PROTEIN BRICK1"/>
    <property type="match status" value="1"/>
</dbReference>
<sequence>MGRGGGMGNPVNVGIAVQADWENREFISNISLNVRRLFDFLLRFEATTKSKLASLNEKLDILERKLEVLEVQVGSATTNPSVFN</sequence>
<keyword id="KW-0175">Coiled coil</keyword>
<keyword id="KW-0963">Cytoplasm</keyword>
<keyword id="KW-0206">Cytoskeleton</keyword>
<keyword id="KW-1185">Reference proteome</keyword>
<accession>Q8RW98</accession>
<proteinExistence type="evidence at transcript level"/>
<reference key="1">
    <citation type="journal article" date="2002" name="Curr. Biol.">
        <title>A small, novel protein highly conserved in plants and animals promotes the polarized growth and division of maize leaf epidermal cells.</title>
        <authorList>
            <person name="Frank M.J."/>
            <person name="Smith L.G."/>
        </authorList>
    </citation>
    <scope>NUCLEOTIDE SEQUENCE [MRNA]</scope>
    <scope>TISSUE SPECIFICITY</scope>
    <source>
        <strain>cv. Wisconsin 64A</strain>
    </source>
</reference>
<protein>
    <recommendedName>
        <fullName>Protein BRICK1</fullName>
    </recommendedName>
</protein>
<gene>
    <name type="primary">BRK1</name>
</gene>
<comment type="function">
    <text>Promotes multiple, actin-dependent cell polarization events in the developing leaf epidermis. Involved in regulation of actin and microtubule organization. Part of a WAVE complex that activates the Arp2/3 complex.</text>
</comment>
<comment type="subunit">
    <text evidence="1">Binds SCAR.</text>
</comment>
<comment type="subcellular location">
    <subcellularLocation>
        <location>Cytoplasm</location>
        <location>Cytoskeleton</location>
    </subcellularLocation>
</comment>
<comment type="tissue specificity">
    <text evidence="3">Expressed in expanding leaves, embryos, ear primordia, and roots. Very low expression in mature leaf tissue.</text>
</comment>
<comment type="similarity">
    <text evidence="4">Belongs to the BRK1 family.</text>
</comment>
<feature type="chain" id="PRO_0000165369" description="Protein BRICK1">
    <location>
        <begin position="1"/>
        <end position="84"/>
    </location>
</feature>
<feature type="coiled-coil region" evidence="2">
    <location>
        <begin position="45"/>
        <end position="79"/>
    </location>
</feature>